<reference key="1">
    <citation type="journal article" date="2009" name="PLoS Genet.">
        <title>Organised genome dynamics in the Escherichia coli species results in highly diverse adaptive paths.</title>
        <authorList>
            <person name="Touchon M."/>
            <person name="Hoede C."/>
            <person name="Tenaillon O."/>
            <person name="Barbe V."/>
            <person name="Baeriswyl S."/>
            <person name="Bidet P."/>
            <person name="Bingen E."/>
            <person name="Bonacorsi S."/>
            <person name="Bouchier C."/>
            <person name="Bouvet O."/>
            <person name="Calteau A."/>
            <person name="Chiapello H."/>
            <person name="Clermont O."/>
            <person name="Cruveiller S."/>
            <person name="Danchin A."/>
            <person name="Diard M."/>
            <person name="Dossat C."/>
            <person name="Karoui M.E."/>
            <person name="Frapy E."/>
            <person name="Garry L."/>
            <person name="Ghigo J.M."/>
            <person name="Gilles A.M."/>
            <person name="Johnson J."/>
            <person name="Le Bouguenec C."/>
            <person name="Lescat M."/>
            <person name="Mangenot S."/>
            <person name="Martinez-Jehanne V."/>
            <person name="Matic I."/>
            <person name="Nassif X."/>
            <person name="Oztas S."/>
            <person name="Petit M.A."/>
            <person name="Pichon C."/>
            <person name="Rouy Z."/>
            <person name="Ruf C.S."/>
            <person name="Schneider D."/>
            <person name="Tourret J."/>
            <person name="Vacherie B."/>
            <person name="Vallenet D."/>
            <person name="Medigue C."/>
            <person name="Rocha E.P.C."/>
            <person name="Denamur E."/>
        </authorList>
    </citation>
    <scope>NUCLEOTIDE SEQUENCE [LARGE SCALE GENOMIC DNA]</scope>
    <source>
        <strain>ED1a</strain>
    </source>
</reference>
<name>GCS2_ECO81</name>
<proteinExistence type="inferred from homology"/>
<keyword id="KW-0067">ATP-binding</keyword>
<keyword id="KW-0436">Ligase</keyword>
<keyword id="KW-0547">Nucleotide-binding</keyword>
<sequence>MPLPDFHVSEPFTLGIELEMQVVNPPGYDLSQDSSMLIDTVKNQITAGEVKHDITESMLELATDVCRDINQAAGQFSAMQKVVLQAAADHHLEICGGGTHPFQKWQRQEVCDNERYQRTLENFGYLIQQATVFGQHVHVGCASGDDAIYLLHGLSRFVPHFIALSAASPYMQGTDTRFASSRPNIFSAFPDNGPMPWVSNWQQFEALFRCLSYTTMIDSIKDLHWDIRPSPHFGTVEVRVMDTPLTLSHAVNMAGLIQATAHWLLTERPFKHQEKDYLMYKFNRFQACRYGLEGVITDPHTGDRRSLTEATLRLLEKIAPSAHKIGASSAIEALHRQVVSGLNEAQLMRDFVADGGSLIGLVKKHCEIWAGE</sequence>
<gene>
    <name type="primary">ybdK</name>
    <name type="ordered locus">ECED1_0573</name>
</gene>
<protein>
    <recommendedName>
        <fullName evidence="1">Putative glutamate--cysteine ligase 2</fullName>
        <ecNumber evidence="1">6.3.2.2</ecNumber>
    </recommendedName>
    <alternativeName>
        <fullName evidence="1">Gamma-glutamylcysteine synthetase 2</fullName>
        <shortName evidence="1">GCS 2</shortName>
        <shortName evidence="1">Gamma-GCS 2</shortName>
    </alternativeName>
</protein>
<evidence type="ECO:0000255" key="1">
    <source>
        <dbReference type="HAMAP-Rule" id="MF_01609"/>
    </source>
</evidence>
<accession>B7MRL6</accession>
<organism>
    <name type="scientific">Escherichia coli O81 (strain ED1a)</name>
    <dbReference type="NCBI Taxonomy" id="585397"/>
    <lineage>
        <taxon>Bacteria</taxon>
        <taxon>Pseudomonadati</taxon>
        <taxon>Pseudomonadota</taxon>
        <taxon>Gammaproteobacteria</taxon>
        <taxon>Enterobacterales</taxon>
        <taxon>Enterobacteriaceae</taxon>
        <taxon>Escherichia</taxon>
    </lineage>
</organism>
<feature type="chain" id="PRO_1000185849" description="Putative glutamate--cysteine ligase 2">
    <location>
        <begin position="1"/>
        <end position="372"/>
    </location>
</feature>
<comment type="function">
    <text evidence="1">ATP-dependent carboxylate-amine ligase which exhibits weak glutamate--cysteine ligase activity.</text>
</comment>
<comment type="catalytic activity">
    <reaction evidence="1">
        <text>L-cysteine + L-glutamate + ATP = gamma-L-glutamyl-L-cysteine + ADP + phosphate + H(+)</text>
        <dbReference type="Rhea" id="RHEA:13285"/>
        <dbReference type="ChEBI" id="CHEBI:15378"/>
        <dbReference type="ChEBI" id="CHEBI:29985"/>
        <dbReference type="ChEBI" id="CHEBI:30616"/>
        <dbReference type="ChEBI" id="CHEBI:35235"/>
        <dbReference type="ChEBI" id="CHEBI:43474"/>
        <dbReference type="ChEBI" id="CHEBI:58173"/>
        <dbReference type="ChEBI" id="CHEBI:456216"/>
        <dbReference type="EC" id="6.3.2.2"/>
    </reaction>
</comment>
<comment type="subunit">
    <text evidence="1">Homodimer.</text>
</comment>
<comment type="similarity">
    <text evidence="1">Belongs to the glutamate--cysteine ligase type 2 family. YbdK subfamily.</text>
</comment>
<dbReference type="EC" id="6.3.2.2" evidence="1"/>
<dbReference type="EMBL" id="CU928162">
    <property type="protein sequence ID" value="CAR06782.1"/>
    <property type="molecule type" value="Genomic_DNA"/>
</dbReference>
<dbReference type="RefSeq" id="WP_001130668.1">
    <property type="nucleotide sequence ID" value="NC_011745.1"/>
</dbReference>
<dbReference type="SMR" id="B7MRL6"/>
<dbReference type="KEGG" id="ecq:ECED1_0573"/>
<dbReference type="HOGENOM" id="CLU_044848_1_1_6"/>
<dbReference type="Proteomes" id="UP000000748">
    <property type="component" value="Chromosome"/>
</dbReference>
<dbReference type="GO" id="GO:0005524">
    <property type="term" value="F:ATP binding"/>
    <property type="evidence" value="ECO:0007669"/>
    <property type="project" value="UniProtKB-KW"/>
</dbReference>
<dbReference type="GO" id="GO:0004357">
    <property type="term" value="F:glutamate-cysteine ligase activity"/>
    <property type="evidence" value="ECO:0007669"/>
    <property type="project" value="UniProtKB-EC"/>
</dbReference>
<dbReference type="GO" id="GO:0042398">
    <property type="term" value="P:modified amino acid biosynthetic process"/>
    <property type="evidence" value="ECO:0007669"/>
    <property type="project" value="InterPro"/>
</dbReference>
<dbReference type="FunFam" id="3.30.590.20:FF:000002">
    <property type="entry name" value="Putative glutamate--cysteine ligase 2"/>
    <property type="match status" value="1"/>
</dbReference>
<dbReference type="Gene3D" id="3.30.590.20">
    <property type="match status" value="1"/>
</dbReference>
<dbReference type="HAMAP" id="MF_01609">
    <property type="entry name" value="Glu_cys_ligase_2"/>
    <property type="match status" value="1"/>
</dbReference>
<dbReference type="InterPro" id="IPR050141">
    <property type="entry name" value="GCL_type2/YbdK_subfam"/>
</dbReference>
<dbReference type="InterPro" id="IPR006336">
    <property type="entry name" value="GCS2"/>
</dbReference>
<dbReference type="InterPro" id="IPR014746">
    <property type="entry name" value="Gln_synth/guanido_kin_cat_dom"/>
</dbReference>
<dbReference type="InterPro" id="IPR011793">
    <property type="entry name" value="YbdK"/>
</dbReference>
<dbReference type="NCBIfam" id="TIGR02050">
    <property type="entry name" value="gshA_cyan_rel"/>
    <property type="match status" value="1"/>
</dbReference>
<dbReference type="NCBIfam" id="NF010040">
    <property type="entry name" value="PRK13516.1"/>
    <property type="match status" value="1"/>
</dbReference>
<dbReference type="PANTHER" id="PTHR36510">
    <property type="entry name" value="GLUTAMATE--CYSTEINE LIGASE 2-RELATED"/>
    <property type="match status" value="1"/>
</dbReference>
<dbReference type="PANTHER" id="PTHR36510:SF1">
    <property type="entry name" value="GLUTAMATE--CYSTEINE LIGASE 2-RELATED"/>
    <property type="match status" value="1"/>
</dbReference>
<dbReference type="Pfam" id="PF04107">
    <property type="entry name" value="GCS2"/>
    <property type="match status" value="1"/>
</dbReference>
<dbReference type="SUPFAM" id="SSF55931">
    <property type="entry name" value="Glutamine synthetase/guanido kinase"/>
    <property type="match status" value="1"/>
</dbReference>